<feature type="chain" id="PRO_1000001229" description="Ribosome maturation factor RimM">
    <location>
        <begin position="1"/>
        <end position="165"/>
    </location>
</feature>
<feature type="domain" description="PRC barrel" evidence="1">
    <location>
        <begin position="94"/>
        <end position="165"/>
    </location>
</feature>
<protein>
    <recommendedName>
        <fullName evidence="1">Ribosome maturation factor RimM</fullName>
    </recommendedName>
</protein>
<evidence type="ECO:0000255" key="1">
    <source>
        <dbReference type="HAMAP-Rule" id="MF_00014"/>
    </source>
</evidence>
<gene>
    <name evidence="1" type="primary">rimM</name>
    <name type="ordered locus">A1G_02680</name>
</gene>
<name>RIMM_RICRS</name>
<accession>A8GRQ6</accession>
<sequence>MNSLENLILVGVIKSCHGIKGHVMLKSFTDPATKILERNLVNESGANIHIKLISQNAKGELICTFNDIATRNEAEHLKGYKIFCLRASLPELEEDEFYIADLTHLPVLNQDHKEIGKIKNILNFGAGDIIEIEFSDQTTELLPFNKEFFPIITKDYVILNYQREA</sequence>
<keyword id="KW-0143">Chaperone</keyword>
<keyword id="KW-0963">Cytoplasm</keyword>
<keyword id="KW-0690">Ribosome biogenesis</keyword>
<keyword id="KW-0698">rRNA processing</keyword>
<proteinExistence type="inferred from homology"/>
<organism>
    <name type="scientific">Rickettsia rickettsii (strain Sheila Smith)</name>
    <dbReference type="NCBI Taxonomy" id="392021"/>
    <lineage>
        <taxon>Bacteria</taxon>
        <taxon>Pseudomonadati</taxon>
        <taxon>Pseudomonadota</taxon>
        <taxon>Alphaproteobacteria</taxon>
        <taxon>Rickettsiales</taxon>
        <taxon>Rickettsiaceae</taxon>
        <taxon>Rickettsieae</taxon>
        <taxon>Rickettsia</taxon>
        <taxon>spotted fever group</taxon>
    </lineage>
</organism>
<comment type="function">
    <text evidence="1">An accessory protein needed during the final step in the assembly of 30S ribosomal subunit, possibly for assembly of the head region. Essential for efficient processing of 16S rRNA. May be needed both before and after RbfA during the maturation of 16S rRNA. It has affinity for free ribosomal 30S subunits but not for 70S ribosomes.</text>
</comment>
<comment type="subunit">
    <text evidence="1">Binds ribosomal protein uS19.</text>
</comment>
<comment type="subcellular location">
    <subcellularLocation>
        <location evidence="1">Cytoplasm</location>
    </subcellularLocation>
</comment>
<comment type="domain">
    <text evidence="1">The PRC barrel domain binds ribosomal protein uS19.</text>
</comment>
<comment type="similarity">
    <text evidence="1">Belongs to the RimM family.</text>
</comment>
<reference key="1">
    <citation type="submission" date="2007-09" db="EMBL/GenBank/DDBJ databases">
        <title>Complete genome sequence of Rickettsia rickettsii.</title>
        <authorList>
            <person name="Madan A."/>
            <person name="Fahey J."/>
            <person name="Helton E."/>
            <person name="Ketteman M."/>
            <person name="Madan A."/>
            <person name="Rodrigues S."/>
            <person name="Sanchez A."/>
            <person name="Dasch G."/>
            <person name="Eremeeva M."/>
        </authorList>
    </citation>
    <scope>NUCLEOTIDE SEQUENCE [LARGE SCALE GENOMIC DNA]</scope>
    <source>
        <strain>Sheila Smith</strain>
    </source>
</reference>
<dbReference type="EMBL" id="CP000848">
    <property type="protein sequence ID" value="ABV76081.1"/>
    <property type="molecule type" value="Genomic_DNA"/>
</dbReference>
<dbReference type="RefSeq" id="WP_012150676.1">
    <property type="nucleotide sequence ID" value="NZ_CP121767.1"/>
</dbReference>
<dbReference type="SMR" id="A8GRQ6"/>
<dbReference type="GeneID" id="79937236"/>
<dbReference type="KEGG" id="rri:A1G_02680"/>
<dbReference type="HOGENOM" id="CLU_077636_0_1_5"/>
<dbReference type="Proteomes" id="UP000006832">
    <property type="component" value="Chromosome"/>
</dbReference>
<dbReference type="GO" id="GO:0005737">
    <property type="term" value="C:cytoplasm"/>
    <property type="evidence" value="ECO:0007669"/>
    <property type="project" value="UniProtKB-SubCell"/>
</dbReference>
<dbReference type="GO" id="GO:0005840">
    <property type="term" value="C:ribosome"/>
    <property type="evidence" value="ECO:0007669"/>
    <property type="project" value="InterPro"/>
</dbReference>
<dbReference type="GO" id="GO:0043022">
    <property type="term" value="F:ribosome binding"/>
    <property type="evidence" value="ECO:0007669"/>
    <property type="project" value="InterPro"/>
</dbReference>
<dbReference type="GO" id="GO:0042274">
    <property type="term" value="P:ribosomal small subunit biogenesis"/>
    <property type="evidence" value="ECO:0007669"/>
    <property type="project" value="UniProtKB-UniRule"/>
</dbReference>
<dbReference type="GO" id="GO:0006364">
    <property type="term" value="P:rRNA processing"/>
    <property type="evidence" value="ECO:0007669"/>
    <property type="project" value="UniProtKB-UniRule"/>
</dbReference>
<dbReference type="Gene3D" id="2.30.30.240">
    <property type="entry name" value="PRC-barrel domain"/>
    <property type="match status" value="1"/>
</dbReference>
<dbReference type="Gene3D" id="2.40.30.60">
    <property type="entry name" value="RimM"/>
    <property type="match status" value="1"/>
</dbReference>
<dbReference type="HAMAP" id="MF_00014">
    <property type="entry name" value="Ribosome_mat_RimM"/>
    <property type="match status" value="1"/>
</dbReference>
<dbReference type="InterPro" id="IPR027275">
    <property type="entry name" value="PRC-brl_dom"/>
</dbReference>
<dbReference type="InterPro" id="IPR011033">
    <property type="entry name" value="PRC_barrel-like_sf"/>
</dbReference>
<dbReference type="InterPro" id="IPR011961">
    <property type="entry name" value="RimM"/>
</dbReference>
<dbReference type="InterPro" id="IPR002676">
    <property type="entry name" value="RimM_N"/>
</dbReference>
<dbReference type="InterPro" id="IPR036976">
    <property type="entry name" value="RimM_N_sf"/>
</dbReference>
<dbReference type="InterPro" id="IPR009000">
    <property type="entry name" value="Transl_B-barrel_sf"/>
</dbReference>
<dbReference type="NCBIfam" id="TIGR02273">
    <property type="entry name" value="16S_RimM"/>
    <property type="match status" value="1"/>
</dbReference>
<dbReference type="PANTHER" id="PTHR33692">
    <property type="entry name" value="RIBOSOME MATURATION FACTOR RIMM"/>
    <property type="match status" value="1"/>
</dbReference>
<dbReference type="PANTHER" id="PTHR33692:SF1">
    <property type="entry name" value="RIBOSOME MATURATION FACTOR RIMM"/>
    <property type="match status" value="1"/>
</dbReference>
<dbReference type="Pfam" id="PF05239">
    <property type="entry name" value="PRC"/>
    <property type="match status" value="1"/>
</dbReference>
<dbReference type="Pfam" id="PF01782">
    <property type="entry name" value="RimM"/>
    <property type="match status" value="1"/>
</dbReference>
<dbReference type="SUPFAM" id="SSF50346">
    <property type="entry name" value="PRC-barrel domain"/>
    <property type="match status" value="1"/>
</dbReference>
<dbReference type="SUPFAM" id="SSF50447">
    <property type="entry name" value="Translation proteins"/>
    <property type="match status" value="1"/>
</dbReference>